<feature type="signal peptide" evidence="3">
    <location>
        <begin position="1"/>
        <end position="15"/>
    </location>
</feature>
<feature type="chain" id="PRO_0000026725" description="Metallocarboxypeptidase inhibitor">
    <location>
        <begin position="16"/>
        <end position="81"/>
    </location>
</feature>
<feature type="site" description="Interaction with carboxypeptidase" evidence="1">
    <location>
        <position position="80"/>
    </location>
</feature>
<feature type="disulfide bond">
    <location>
        <begin position="25"/>
        <end position="48"/>
    </location>
</feature>
<feature type="disulfide bond">
    <location>
        <begin position="32"/>
        <end position="76"/>
    </location>
</feature>
<feature type="disulfide bond">
    <location>
        <begin position="33"/>
        <end position="57"/>
    </location>
</feature>
<feature type="disulfide bond">
    <location>
        <begin position="36"/>
        <end position="72"/>
    </location>
</feature>
<feature type="strand" evidence="5">
    <location>
        <begin position="21"/>
        <end position="26"/>
    </location>
</feature>
<feature type="strand" evidence="5">
    <location>
        <begin position="31"/>
        <end position="38"/>
    </location>
</feature>
<feature type="helix" evidence="5">
    <location>
        <begin position="43"/>
        <end position="45"/>
    </location>
</feature>
<feature type="strand" evidence="5">
    <location>
        <begin position="47"/>
        <end position="50"/>
    </location>
</feature>
<feature type="helix" evidence="5">
    <location>
        <begin position="55"/>
        <end position="60"/>
    </location>
</feature>
<feature type="strand" evidence="5">
    <location>
        <begin position="65"/>
        <end position="67"/>
    </location>
</feature>
<feature type="strand" evidence="5">
    <location>
        <begin position="70"/>
        <end position="77"/>
    </location>
</feature>
<dbReference type="EMBL" id="AJ010948">
    <property type="protein sequence ID" value="CAA09422.1"/>
    <property type="molecule type" value="mRNA"/>
</dbReference>
<dbReference type="PDB" id="1DTD">
    <property type="method" value="X-ray"/>
    <property type="resolution" value="1.65 A"/>
    <property type="chains" value="B=20-80"/>
</dbReference>
<dbReference type="PDB" id="1DTV">
    <property type="method" value="NMR"/>
    <property type="chains" value="A=16-81"/>
</dbReference>
<dbReference type="PDB" id="1ZFI">
    <property type="method" value="NMR"/>
    <property type="chains" value="A=16-81"/>
</dbReference>
<dbReference type="PDB" id="1ZFL">
    <property type="method" value="NMR"/>
    <property type="chains" value="A=16-81"/>
</dbReference>
<dbReference type="PDB" id="2ABZ">
    <property type="method" value="X-ray"/>
    <property type="resolution" value="2.16 A"/>
    <property type="chains" value="C/D/E/F=16-81"/>
</dbReference>
<dbReference type="PDBsum" id="1DTD"/>
<dbReference type="PDBsum" id="1DTV"/>
<dbReference type="PDBsum" id="1ZFI"/>
<dbReference type="PDBsum" id="1ZFL"/>
<dbReference type="PDBsum" id="2ABZ"/>
<dbReference type="SMR" id="P81511"/>
<dbReference type="MINT" id="P81511"/>
<dbReference type="MEROPS" id="I46.001"/>
<dbReference type="EvolutionaryTrace" id="P81511"/>
<dbReference type="GO" id="GO:0030414">
    <property type="term" value="F:peptidase inhibitor activity"/>
    <property type="evidence" value="ECO:0007669"/>
    <property type="project" value="UniProtKB-KW"/>
</dbReference>
<dbReference type="Gene3D" id="3.30.1040.10">
    <property type="entry name" value="Carboxypeptidase inhibitor"/>
    <property type="match status" value="1"/>
</dbReference>
<dbReference type="InterPro" id="IPR024063">
    <property type="entry name" value="Prot_inh_LCI"/>
</dbReference>
<dbReference type="SUPFAM" id="SSF57620">
    <property type="entry name" value="Carboxypeptidase inhibitor"/>
    <property type="match status" value="1"/>
</dbReference>
<name>MCPI_HIRME</name>
<reference key="1">
    <citation type="journal article" date="1998" name="J. Biol. Chem.">
        <title>A carboxypeptidase inhibitor from the medical leech Hirudo medicinalis. Isolation, sequence analysis, cDNA cloning, recombinant expression, and characterization.</title>
        <authorList>
            <person name="Reverter D."/>
            <person name="Vendrell J."/>
            <person name="Canals F."/>
            <person name="Horstmann J."/>
            <person name="Aviles F.X."/>
            <person name="Fritz H."/>
            <person name="Sommerhoff C.P."/>
        </authorList>
    </citation>
    <scope>NUCLEOTIDE SEQUENCE [MRNA]</scope>
    <scope>PROTEIN SEQUENCE OF 16-81</scope>
    <scope>MASS SPECTROMETRY</scope>
</reference>
<reference key="2">
    <citation type="journal article" date="2000" name="Nat. Struct. Biol.">
        <title>Structure of a novel leech carboxypeptidase inhibitor determined free in solution and in complex with human carboxypeptidase A2.</title>
        <authorList>
            <person name="Reverter D."/>
            <person name="Fernandez-Catalan C."/>
            <person name="Baumgartner R."/>
            <person name="Pfander R."/>
            <person name="Huber R."/>
            <person name="Bode W."/>
            <person name="Vendrell J."/>
            <person name="Holak T.A."/>
            <person name="Aviles F.X."/>
        </authorList>
    </citation>
    <scope>STRUCTURE BY NMR</scope>
    <scope>X-RAY CRYSTALLOGRAPHY (1.65 ANGSTROMS) IN COMPLEX WITH HUMAN CPA2</scope>
</reference>
<comment type="function">
    <text evidence="2 3">Tightly binding, competitive inhibitor of different types of pancreatic-like carboxypeptidases (PubMed:9830043). Inhibits human CPA4 (PubMed:10742178).</text>
</comment>
<comment type="mass spectrometry"/>
<comment type="similarity">
    <text evidence="4">Belongs to the protease inhibitor I46 family.</text>
</comment>
<accession>P81511</accession>
<sequence>MFLLVFLCCLHLVISSHTPDESFLCYQPDQVCCFICRGAAPLPSEGECNPHPTAPWCREGAVEWVPYSTGQCRTTCIPYVE</sequence>
<evidence type="ECO:0000250" key="1"/>
<evidence type="ECO:0000269" key="2">
    <source>
    </source>
</evidence>
<evidence type="ECO:0000269" key="3">
    <source>
    </source>
</evidence>
<evidence type="ECO:0000305" key="4"/>
<evidence type="ECO:0007829" key="5">
    <source>
        <dbReference type="PDB" id="1DTD"/>
    </source>
</evidence>
<organism>
    <name type="scientific">Hirudo medicinalis</name>
    <name type="common">Medicinal leech</name>
    <dbReference type="NCBI Taxonomy" id="6421"/>
    <lineage>
        <taxon>Eukaryota</taxon>
        <taxon>Metazoa</taxon>
        <taxon>Spiralia</taxon>
        <taxon>Lophotrochozoa</taxon>
        <taxon>Annelida</taxon>
        <taxon>Clitellata</taxon>
        <taxon>Hirudinea</taxon>
        <taxon>Hirudinida</taxon>
        <taxon>Hirudiniformes</taxon>
        <taxon>Hirudinidae</taxon>
        <taxon>Hirudo</taxon>
    </lineage>
</organism>
<keyword id="KW-0002">3D-structure</keyword>
<keyword id="KW-0903">Direct protein sequencing</keyword>
<keyword id="KW-1015">Disulfide bond</keyword>
<keyword id="KW-0481">Metalloenzyme inhibitor</keyword>
<keyword id="KW-0483">Metalloprotease inhibitor</keyword>
<keyword id="KW-0646">Protease inhibitor</keyword>
<keyword id="KW-0732">Signal</keyword>
<protein>
    <recommendedName>
        <fullName>Metallocarboxypeptidase inhibitor</fullName>
    </recommendedName>
    <alternativeName>
        <fullName>Leech carboxypeptidase inhibitor</fullName>
        <shortName>LCI</shortName>
    </alternativeName>
</protein>
<proteinExistence type="evidence at protein level"/>